<protein>
    <recommendedName>
        <fullName>Bacillolysin</fullName>
        <ecNumber>3.4.24.28</ecNumber>
    </recommendedName>
    <alternativeName>
        <fullName>Thermostable neutral protease</fullName>
    </alternativeName>
</protein>
<sequence length="544" mass="59413">MNKRAMLGAIGLAFGLMAWPFGASAKGKSMVWNEQWKTPSFVSGSLLGRCSQELVYRYLDQEKNTFQLGGQARERLSLIGNKLDELGHTVMRFEQAIAASLCMGAVLVAHVNDGELSSLSGTLIPNLDKRTLKTEAAISIQQAEMIAKQDVADRVTKERPAAEEGKPTRLVIYPDEETPRLAYEVNVRFLTPVPGNWIYMIDAADGKVLNKWNQMDEAKPGGAQPVAGTSTVGVGRGVLGDQKYINTTYSSYYGYYYLQDNTRGSGIFTYDGRNRTVLPGSLWADGDNQFFASYDAAAVDAHYYAGVVYDYYKNVHGRLSYDGSNAAIRSTVHYGRGYNNAFWNGSQMVYGDGDGQTFLPFSGGIDVVGHELTHAVTDYTAGLVYQNESGAINEAMSDIFGTLVEFYANRNPDWEIGEDIYTPGVAGDALRSMSDPAKYGDPDHYSKRYTGTQDNGGVHTNSGIINKAAYLLSQGGVHYGVSVTGIGRDKMGKIFYRALVYYLTPTSNFSQLRAACVQAAADLYGSTSQEVNSVKQAFNAVGVY</sequence>
<name>NPRE_BACCL</name>
<reference key="1">
    <citation type="journal article" date="1991" name="J. Bacteriol.">
        <title>A highly thermostable neutral protease from Bacillus caldolyticus: cloning and expression of the gene in Bacillus subtilis and characterization of the gene product.</title>
        <authorList>
            <person name="van den Burg B."/>
            <person name="Enequist H.G."/>
            <person name="van de Haar M.E."/>
            <person name="Eijsink V.G.H."/>
            <person name="Stulp B.K."/>
            <person name="Venema G."/>
        </authorList>
    </citation>
    <scope>NUCLEOTIDE SEQUENCE [GENOMIC DNA]</scope>
</reference>
<accession>P23384</accession>
<dbReference type="EC" id="3.4.24.28"/>
<dbReference type="EMBL" id="M63575">
    <property type="protein sequence ID" value="AAA22623.1"/>
    <property type="molecule type" value="Genomic_DNA"/>
</dbReference>
<dbReference type="PIR" id="A42464">
    <property type="entry name" value="A42464"/>
</dbReference>
<dbReference type="SMR" id="P23384"/>
<dbReference type="MEROPS" id="M04.018"/>
<dbReference type="GO" id="GO:0005576">
    <property type="term" value="C:extracellular region"/>
    <property type="evidence" value="ECO:0007669"/>
    <property type="project" value="UniProtKB-SubCell"/>
</dbReference>
<dbReference type="GO" id="GO:0046872">
    <property type="term" value="F:metal ion binding"/>
    <property type="evidence" value="ECO:0007669"/>
    <property type="project" value="UniProtKB-KW"/>
</dbReference>
<dbReference type="GO" id="GO:0004222">
    <property type="term" value="F:metalloendopeptidase activity"/>
    <property type="evidence" value="ECO:0007669"/>
    <property type="project" value="InterPro"/>
</dbReference>
<dbReference type="GO" id="GO:0006508">
    <property type="term" value="P:proteolysis"/>
    <property type="evidence" value="ECO:0007669"/>
    <property type="project" value="UniProtKB-KW"/>
</dbReference>
<dbReference type="CDD" id="cd09597">
    <property type="entry name" value="M4_TLP"/>
    <property type="match status" value="1"/>
</dbReference>
<dbReference type="FunFam" id="1.10.390.10:FF:000012">
    <property type="entry name" value="Thermolysin"/>
    <property type="match status" value="1"/>
</dbReference>
<dbReference type="Gene3D" id="3.10.170.10">
    <property type="match status" value="1"/>
</dbReference>
<dbReference type="Gene3D" id="3.10.450.40">
    <property type="match status" value="1"/>
</dbReference>
<dbReference type="Gene3D" id="3.10.450.490">
    <property type="match status" value="1"/>
</dbReference>
<dbReference type="Gene3D" id="1.10.390.10">
    <property type="entry name" value="Neutral Protease Domain 2"/>
    <property type="match status" value="1"/>
</dbReference>
<dbReference type="InterPro" id="IPR025711">
    <property type="entry name" value="PepSY"/>
</dbReference>
<dbReference type="InterPro" id="IPR023612">
    <property type="entry name" value="Peptidase_M4"/>
</dbReference>
<dbReference type="InterPro" id="IPR027268">
    <property type="entry name" value="Peptidase_M4/M1_CTD_sf"/>
</dbReference>
<dbReference type="InterPro" id="IPR001570">
    <property type="entry name" value="Peptidase_M4_C_domain"/>
</dbReference>
<dbReference type="InterPro" id="IPR013856">
    <property type="entry name" value="Peptidase_M4_domain"/>
</dbReference>
<dbReference type="InterPro" id="IPR050728">
    <property type="entry name" value="Zinc_Metalloprotease_M4"/>
</dbReference>
<dbReference type="PANTHER" id="PTHR33794">
    <property type="entry name" value="BACILLOLYSIN"/>
    <property type="match status" value="1"/>
</dbReference>
<dbReference type="PANTHER" id="PTHR33794:SF3">
    <property type="entry name" value="NEUTRAL PROTEASE B"/>
    <property type="match status" value="1"/>
</dbReference>
<dbReference type="Pfam" id="PF03413">
    <property type="entry name" value="PepSY"/>
    <property type="match status" value="1"/>
</dbReference>
<dbReference type="Pfam" id="PF01447">
    <property type="entry name" value="Peptidase_M4"/>
    <property type="match status" value="1"/>
</dbReference>
<dbReference type="Pfam" id="PF02868">
    <property type="entry name" value="Peptidase_M4_C"/>
    <property type="match status" value="1"/>
</dbReference>
<dbReference type="PRINTS" id="PR00730">
    <property type="entry name" value="THERMOLYSIN"/>
</dbReference>
<dbReference type="SUPFAM" id="SSF55486">
    <property type="entry name" value="Metalloproteases ('zincins'), catalytic domain"/>
    <property type="match status" value="1"/>
</dbReference>
<dbReference type="PROSITE" id="PS00142">
    <property type="entry name" value="ZINC_PROTEASE"/>
    <property type="match status" value="1"/>
</dbReference>
<keyword id="KW-0106">Calcium</keyword>
<keyword id="KW-0378">Hydrolase</keyword>
<keyword id="KW-0479">Metal-binding</keyword>
<keyword id="KW-0482">Metalloprotease</keyword>
<keyword id="KW-0645">Protease</keyword>
<keyword id="KW-0964">Secreted</keyword>
<keyword id="KW-0732">Signal</keyword>
<keyword id="KW-0862">Zinc</keyword>
<keyword id="KW-0865">Zymogen</keyword>
<proteinExistence type="evidence at protein level"/>
<evidence type="ECO:0000250" key="1"/>
<evidence type="ECO:0000255" key="2">
    <source>
        <dbReference type="PROSITE-ProRule" id="PRU10095"/>
    </source>
</evidence>
<evidence type="ECO:0000305" key="3"/>
<feature type="signal peptide">
    <location>
        <begin position="1"/>
        <end position="25"/>
    </location>
</feature>
<feature type="propeptide" id="PRO_0000028600" description="Activation peptide">
    <location>
        <begin position="26"/>
        <end position="225"/>
    </location>
</feature>
<feature type="chain" id="PRO_0000028601" description="Bacillolysin">
    <location>
        <begin position="226"/>
        <end position="544"/>
    </location>
</feature>
<feature type="active site" evidence="2">
    <location>
        <position position="371"/>
    </location>
</feature>
<feature type="active site" description="Proton donor" evidence="2">
    <location>
        <position position="459"/>
    </location>
</feature>
<feature type="binding site" evidence="1">
    <location>
        <position position="285"/>
    </location>
    <ligand>
        <name>Ca(2+)</name>
        <dbReference type="ChEBI" id="CHEBI:29108"/>
        <label>1</label>
    </ligand>
</feature>
<feature type="binding site" evidence="1">
    <location>
        <position position="287"/>
    </location>
    <ligand>
        <name>Ca(2+)</name>
        <dbReference type="ChEBI" id="CHEBI:29108"/>
        <label>1</label>
    </ligand>
</feature>
<feature type="binding site" evidence="1">
    <location>
        <position position="289"/>
    </location>
    <ligand>
        <name>Ca(2+)</name>
        <dbReference type="ChEBI" id="CHEBI:29108"/>
        <label>1</label>
    </ligand>
</feature>
<feature type="binding site" evidence="1">
    <location>
        <position position="366"/>
    </location>
    <ligand>
        <name>Ca(2+)</name>
        <dbReference type="ChEBI" id="CHEBI:29108"/>
        <label>2</label>
    </ligand>
</feature>
<feature type="binding site" evidence="2">
    <location>
        <position position="370"/>
    </location>
    <ligand>
        <name>Zn(2+)</name>
        <dbReference type="ChEBI" id="CHEBI:29105"/>
        <note>catalytic</note>
    </ligand>
</feature>
<feature type="binding site" evidence="2">
    <location>
        <position position="374"/>
    </location>
    <ligand>
        <name>Zn(2+)</name>
        <dbReference type="ChEBI" id="CHEBI:29105"/>
        <note>catalytic</note>
    </ligand>
</feature>
<feature type="binding site" evidence="2">
    <location>
        <position position="394"/>
    </location>
    <ligand>
        <name>Zn(2+)</name>
        <dbReference type="ChEBI" id="CHEBI:29105"/>
        <note>catalytic</note>
    </ligand>
</feature>
<feature type="binding site" evidence="1">
    <location>
        <position position="405"/>
    </location>
    <ligand>
        <name>Ca(2+)</name>
        <dbReference type="ChEBI" id="CHEBI:29108"/>
        <label>2</label>
    </ligand>
</feature>
<feature type="binding site" evidence="1">
    <location>
        <position position="405"/>
    </location>
    <ligand>
        <name>Ca(2+)</name>
        <dbReference type="ChEBI" id="CHEBI:29108"/>
        <label>3</label>
    </ligand>
</feature>
<feature type="binding site" evidence="1">
    <location>
        <position position="411"/>
    </location>
    <ligand>
        <name>Ca(2+)</name>
        <dbReference type="ChEBI" id="CHEBI:29108"/>
        <label>3</label>
    </ligand>
</feature>
<feature type="binding site" evidence="1">
    <location>
        <position position="413"/>
    </location>
    <ligand>
        <name>Ca(2+)</name>
        <dbReference type="ChEBI" id="CHEBI:29108"/>
        <label>2</label>
    </ligand>
</feature>
<feature type="binding site" evidence="1">
    <location>
        <position position="413"/>
    </location>
    <ligand>
        <name>Ca(2+)</name>
        <dbReference type="ChEBI" id="CHEBI:29108"/>
        <label>3</label>
    </ligand>
</feature>
<feature type="binding site" evidence="1">
    <location>
        <position position="415"/>
    </location>
    <ligand>
        <name>Ca(2+)</name>
        <dbReference type="ChEBI" id="CHEBI:29108"/>
        <label>2</label>
    </ligand>
</feature>
<feature type="binding site" evidence="1">
    <location>
        <position position="418"/>
    </location>
    <ligand>
        <name>Ca(2+)</name>
        <dbReference type="ChEBI" id="CHEBI:29108"/>
        <label>2</label>
    </ligand>
</feature>
<feature type="binding site" evidence="1">
    <location>
        <position position="418"/>
    </location>
    <ligand>
        <name>Ca(2+)</name>
        <dbReference type="ChEBI" id="CHEBI:29108"/>
        <label>3</label>
    </ligand>
</feature>
<feature type="binding site" evidence="1">
    <location>
        <position position="421"/>
    </location>
    <ligand>
        <name>Ca(2+)</name>
        <dbReference type="ChEBI" id="CHEBI:29108"/>
        <label>4</label>
    </ligand>
</feature>
<feature type="binding site" evidence="1">
    <location>
        <position position="422"/>
    </location>
    <ligand>
        <name>Ca(2+)</name>
        <dbReference type="ChEBI" id="CHEBI:29108"/>
        <label>4</label>
    </ligand>
</feature>
<feature type="binding site" evidence="1">
    <location>
        <position position="425"/>
    </location>
    <ligand>
        <name>Ca(2+)</name>
        <dbReference type="ChEBI" id="CHEBI:29108"/>
        <label>4</label>
    </ligand>
</feature>
<feature type="binding site" evidence="1">
    <location>
        <position position="428"/>
    </location>
    <ligand>
        <name>Ca(2+)</name>
        <dbReference type="ChEBI" id="CHEBI:29108"/>
        <label>4</label>
    </ligand>
</feature>
<gene>
    <name type="primary">npr</name>
</gene>
<organism>
    <name type="scientific">Bacillus caldolyticus</name>
    <dbReference type="NCBI Taxonomy" id="1394"/>
    <lineage>
        <taxon>Bacteria</taxon>
        <taxon>Bacillati</taxon>
        <taxon>Bacillota</taxon>
        <taxon>Bacilli</taxon>
        <taxon>Bacillales</taxon>
        <taxon>Anoxybacillaceae</taxon>
        <taxon>Geobacillus</taxon>
        <taxon>Geobacillus thermoleovorans group</taxon>
    </lineage>
</organism>
<comment type="function">
    <text>Extracellular zinc metalloprotease.</text>
</comment>
<comment type="catalytic activity">
    <reaction>
        <text>Similar, but not identical, to that of thermolysin.</text>
        <dbReference type="EC" id="3.4.24.28"/>
    </reaction>
</comment>
<comment type="cofactor">
    <cofactor evidence="1">
        <name>Ca(2+)</name>
        <dbReference type="ChEBI" id="CHEBI:29108"/>
    </cofactor>
    <text evidence="1">Binds 4 Ca(2+) ions per subunit.</text>
</comment>
<comment type="cofactor">
    <cofactor evidence="1">
        <name>Zn(2+)</name>
        <dbReference type="ChEBI" id="CHEBI:29105"/>
    </cofactor>
    <text evidence="1">Binds 1 zinc ion per subunit.</text>
</comment>
<comment type="biophysicochemical properties">
    <temperatureDependence>
        <text>Thermostable.</text>
    </temperatureDependence>
</comment>
<comment type="subcellular location">
    <subcellularLocation>
        <location>Secreted</location>
    </subcellularLocation>
</comment>
<comment type="similarity">
    <text evidence="3">Belongs to the peptidase M4 family.</text>
</comment>